<organism>
    <name type="scientific">Photobacterium profundum (strain SS9)</name>
    <dbReference type="NCBI Taxonomy" id="298386"/>
    <lineage>
        <taxon>Bacteria</taxon>
        <taxon>Pseudomonadati</taxon>
        <taxon>Pseudomonadota</taxon>
        <taxon>Gammaproteobacteria</taxon>
        <taxon>Vibrionales</taxon>
        <taxon>Vibrionaceae</taxon>
        <taxon>Photobacterium</taxon>
    </lineage>
</organism>
<comment type="subcellular location">
    <subcellularLocation>
        <location evidence="1">Cytoplasm</location>
    </subcellularLocation>
</comment>
<comment type="similarity">
    <text evidence="1">Belongs to the TACO1 family.</text>
</comment>
<comment type="sequence caution" evidence="2">
    <conflict type="erroneous initiation">
        <sequence resource="EMBL-CDS" id="CAG23442"/>
    </conflict>
</comment>
<reference key="1">
    <citation type="journal article" date="2005" name="Science">
        <title>Life at depth: Photobacterium profundum genome sequence and expression analysis.</title>
        <authorList>
            <person name="Vezzi A."/>
            <person name="Campanaro S."/>
            <person name="D'Angelo M."/>
            <person name="Simonato F."/>
            <person name="Vitulo N."/>
            <person name="Lauro F.M."/>
            <person name="Cestaro A."/>
            <person name="Malacrida G."/>
            <person name="Simionati B."/>
            <person name="Cannata N."/>
            <person name="Romualdi C."/>
            <person name="Bartlett D.H."/>
            <person name="Valle G."/>
        </authorList>
    </citation>
    <scope>NUCLEOTIDE SEQUENCE [LARGE SCALE GENOMIC DNA]</scope>
    <source>
        <strain>ATCC BAA-1253 / SS9</strain>
    </source>
</reference>
<accession>Q6LGY8</accession>
<sequence length="240" mass="26827">MGRKFEVRKLSMAKTAGAKIKVYSKYGKEIYVCAKNGSLDPDSNLSLKRLIEKAKKDQVPSHVIEKAIDKAKGGAGEEFATARYEWFGPRYCMVIVDCLTDNNNRTFMDVRQAFVKNHAKIGGPGTVGHMFEHQAVFQFAGDDEDMVLENLMMEDVDVSDIECEDGIITVYAPHTEFFKVKNALAATMPDVAFDVEEISFVPQTMTEISGDDVAAFEKFLDVLNDCDDVQNIYHNAEIAE</sequence>
<protein>
    <recommendedName>
        <fullName evidence="1">Probable transcriptional regulatory protein PBPRB1582</fullName>
    </recommendedName>
</protein>
<gene>
    <name type="ordered locus">PBPRB1582</name>
</gene>
<name>Y5582_PHOPR</name>
<dbReference type="EMBL" id="CR378679">
    <property type="protein sequence ID" value="CAG23442.1"/>
    <property type="status" value="ALT_INIT"/>
    <property type="molecule type" value="Genomic_DNA"/>
</dbReference>
<dbReference type="RefSeq" id="WP_011221599.1">
    <property type="nucleotide sequence ID" value="NC_006371.1"/>
</dbReference>
<dbReference type="SMR" id="Q6LGY8"/>
<dbReference type="STRING" id="298386.PBPRB1582"/>
<dbReference type="KEGG" id="ppr:PBPRB1582"/>
<dbReference type="eggNOG" id="COG0217">
    <property type="taxonomic scope" value="Bacteria"/>
</dbReference>
<dbReference type="HOGENOM" id="CLU_062974_2_0_6"/>
<dbReference type="Proteomes" id="UP000000593">
    <property type="component" value="Chromosome 2"/>
</dbReference>
<dbReference type="GO" id="GO:0005829">
    <property type="term" value="C:cytosol"/>
    <property type="evidence" value="ECO:0007669"/>
    <property type="project" value="TreeGrafter"/>
</dbReference>
<dbReference type="GO" id="GO:0003677">
    <property type="term" value="F:DNA binding"/>
    <property type="evidence" value="ECO:0007669"/>
    <property type="project" value="UniProtKB-UniRule"/>
</dbReference>
<dbReference type="GO" id="GO:0006355">
    <property type="term" value="P:regulation of DNA-templated transcription"/>
    <property type="evidence" value="ECO:0007669"/>
    <property type="project" value="UniProtKB-UniRule"/>
</dbReference>
<dbReference type="FunFam" id="1.10.10.200:FF:000003">
    <property type="entry name" value="Probable transcriptional regulatory protein YeeN"/>
    <property type="match status" value="1"/>
</dbReference>
<dbReference type="Gene3D" id="1.10.10.200">
    <property type="match status" value="1"/>
</dbReference>
<dbReference type="Gene3D" id="3.30.70.980">
    <property type="match status" value="2"/>
</dbReference>
<dbReference type="HAMAP" id="MF_00693">
    <property type="entry name" value="Transcrip_reg_TACO1"/>
    <property type="match status" value="1"/>
</dbReference>
<dbReference type="InterPro" id="IPR017856">
    <property type="entry name" value="Integrase-like_N"/>
</dbReference>
<dbReference type="InterPro" id="IPR048300">
    <property type="entry name" value="TACO1_YebC-like_2nd/3rd_dom"/>
</dbReference>
<dbReference type="InterPro" id="IPR049083">
    <property type="entry name" value="TACO1_YebC_N"/>
</dbReference>
<dbReference type="InterPro" id="IPR002876">
    <property type="entry name" value="Transcrip_reg_TACO1-like"/>
</dbReference>
<dbReference type="InterPro" id="IPR026564">
    <property type="entry name" value="Transcrip_reg_TACO1-like_dom3"/>
</dbReference>
<dbReference type="InterPro" id="IPR029072">
    <property type="entry name" value="YebC-like"/>
</dbReference>
<dbReference type="NCBIfam" id="NF009044">
    <property type="entry name" value="PRK12378.1"/>
    <property type="match status" value="1"/>
</dbReference>
<dbReference type="PANTHER" id="PTHR12532">
    <property type="entry name" value="TRANSLATIONAL ACTIVATOR OF CYTOCHROME C OXIDASE 1"/>
    <property type="match status" value="1"/>
</dbReference>
<dbReference type="PANTHER" id="PTHR12532:SF0">
    <property type="entry name" value="TRANSLATIONAL ACTIVATOR OF CYTOCHROME C OXIDASE 1"/>
    <property type="match status" value="1"/>
</dbReference>
<dbReference type="Pfam" id="PF20772">
    <property type="entry name" value="TACO1_YebC_N"/>
    <property type="match status" value="1"/>
</dbReference>
<dbReference type="Pfam" id="PF01709">
    <property type="entry name" value="Transcrip_reg"/>
    <property type="match status" value="1"/>
</dbReference>
<dbReference type="SUPFAM" id="SSF75625">
    <property type="entry name" value="YebC-like"/>
    <property type="match status" value="1"/>
</dbReference>
<keyword id="KW-0963">Cytoplasm</keyword>
<keyword id="KW-0238">DNA-binding</keyword>
<keyword id="KW-1185">Reference proteome</keyword>
<keyword id="KW-0804">Transcription</keyword>
<keyword id="KW-0805">Transcription regulation</keyword>
<feature type="chain" id="PRO_0000175864" description="Probable transcriptional regulatory protein PBPRB1582">
    <location>
        <begin position="1"/>
        <end position="240"/>
    </location>
</feature>
<proteinExistence type="inferred from homology"/>
<evidence type="ECO:0000255" key="1">
    <source>
        <dbReference type="HAMAP-Rule" id="MF_00693"/>
    </source>
</evidence>
<evidence type="ECO:0000305" key="2"/>